<comment type="function">
    <text evidence="1">Catalyzes the attachment of isoleucine to tRNA(Ile). As IleRS can inadvertently accommodate and process structurally similar amino acids such as valine, to avoid such errors it has two additional distinct tRNA(Ile)-dependent editing activities. One activity is designated as 'pretransfer' editing and involves the hydrolysis of activated Val-AMP. The other activity is designated 'posttransfer' editing and involves deacylation of mischarged Val-tRNA(Ile).</text>
</comment>
<comment type="catalytic activity">
    <reaction evidence="1">
        <text>tRNA(Ile) + L-isoleucine + ATP = L-isoleucyl-tRNA(Ile) + AMP + diphosphate</text>
        <dbReference type="Rhea" id="RHEA:11060"/>
        <dbReference type="Rhea" id="RHEA-COMP:9666"/>
        <dbReference type="Rhea" id="RHEA-COMP:9695"/>
        <dbReference type="ChEBI" id="CHEBI:30616"/>
        <dbReference type="ChEBI" id="CHEBI:33019"/>
        <dbReference type="ChEBI" id="CHEBI:58045"/>
        <dbReference type="ChEBI" id="CHEBI:78442"/>
        <dbReference type="ChEBI" id="CHEBI:78528"/>
        <dbReference type="ChEBI" id="CHEBI:456215"/>
        <dbReference type="EC" id="6.1.1.5"/>
    </reaction>
</comment>
<comment type="cofactor">
    <cofactor evidence="1">
        <name>Zn(2+)</name>
        <dbReference type="ChEBI" id="CHEBI:29105"/>
    </cofactor>
</comment>
<comment type="subunit">
    <text evidence="1">Monomer.</text>
</comment>
<comment type="subcellular location">
    <subcellularLocation>
        <location evidence="1">Cytoplasm</location>
    </subcellularLocation>
</comment>
<comment type="domain">
    <text evidence="1">IleRS has two distinct active sites: one for aminoacylation and one for editing. The misactivated valine is translocated from the active site to the editing site, which sterically excludes the correctly activated isoleucine. The single editing site contains two valyl binding pockets, one specific for each substrate (Val-AMP or Val-tRNA(Ile)).</text>
</comment>
<comment type="similarity">
    <text evidence="1">Belongs to the class-I aminoacyl-tRNA synthetase family. IleS type 2 subfamily.</text>
</comment>
<protein>
    <recommendedName>
        <fullName evidence="1">Isoleucine--tRNA ligase</fullName>
        <ecNumber evidence="1">6.1.1.5</ecNumber>
    </recommendedName>
    <alternativeName>
        <fullName evidence="1">Isoleucyl-tRNA synthetase</fullName>
        <shortName evidence="1">IleRS</shortName>
    </alternativeName>
</protein>
<reference key="1">
    <citation type="journal article" date="2002" name="Proc. Natl. Acad. Sci. U.S.A.">
        <title>Genome sequence of the hyperthermophilic crenarchaeon Pyrobaculum aerophilum.</title>
        <authorList>
            <person name="Fitz-Gibbon S.T."/>
            <person name="Ladner H."/>
            <person name="Kim U.-J."/>
            <person name="Stetter K.O."/>
            <person name="Simon M.I."/>
            <person name="Miller J.H."/>
        </authorList>
    </citation>
    <scope>NUCLEOTIDE SEQUENCE [LARGE SCALE GENOMIC DNA]</scope>
    <source>
        <strain>ATCC 51768 / DSM 7523 / JCM 9630 / CIP 104966 / NBRC 100827 / IM2</strain>
    </source>
</reference>
<feature type="chain" id="PRO_0000098587" description="Isoleucine--tRNA ligase">
    <location>
        <begin position="1"/>
        <end position="981"/>
    </location>
</feature>
<feature type="short sequence motif" description="'HIGH' region">
    <location>
        <begin position="50"/>
        <end position="60"/>
    </location>
</feature>
<feature type="short sequence motif" description="'KMSKS' region">
    <location>
        <begin position="604"/>
        <end position="608"/>
    </location>
</feature>
<feature type="binding site" evidence="1">
    <location>
        <position position="607"/>
    </location>
    <ligand>
        <name>ATP</name>
        <dbReference type="ChEBI" id="CHEBI:30616"/>
    </ligand>
</feature>
<evidence type="ECO:0000255" key="1">
    <source>
        <dbReference type="HAMAP-Rule" id="MF_02003"/>
    </source>
</evidence>
<organism>
    <name type="scientific">Pyrobaculum aerophilum (strain ATCC 51768 / DSM 7523 / JCM 9630 / CIP 104966 / NBRC 100827 / IM2)</name>
    <dbReference type="NCBI Taxonomy" id="178306"/>
    <lineage>
        <taxon>Archaea</taxon>
        <taxon>Thermoproteota</taxon>
        <taxon>Thermoprotei</taxon>
        <taxon>Thermoproteales</taxon>
        <taxon>Thermoproteaceae</taxon>
        <taxon>Pyrobaculum</taxon>
    </lineage>
</organism>
<accession>Q8ZWU4</accession>
<proteinExistence type="inferred from homology"/>
<dbReference type="EC" id="6.1.1.5" evidence="1"/>
<dbReference type="EMBL" id="AE009441">
    <property type="protein sequence ID" value="AAL63605.1"/>
    <property type="molecule type" value="Genomic_DNA"/>
</dbReference>
<dbReference type="RefSeq" id="WP_011008078.1">
    <property type="nucleotide sequence ID" value="NC_003364.1"/>
</dbReference>
<dbReference type="SMR" id="Q8ZWU4"/>
<dbReference type="FunCoup" id="Q8ZWU4">
    <property type="interactions" value="249"/>
</dbReference>
<dbReference type="STRING" id="178306.PAE1617"/>
<dbReference type="EnsemblBacteria" id="AAL63605">
    <property type="protein sequence ID" value="AAL63605"/>
    <property type="gene ID" value="PAE1617"/>
</dbReference>
<dbReference type="GeneID" id="1465853"/>
<dbReference type="KEGG" id="pai:PAE1617"/>
<dbReference type="PATRIC" id="fig|178306.9.peg.1193"/>
<dbReference type="eggNOG" id="arCOG00807">
    <property type="taxonomic scope" value="Archaea"/>
</dbReference>
<dbReference type="HOGENOM" id="CLU_001493_1_1_2"/>
<dbReference type="InParanoid" id="Q8ZWU4"/>
<dbReference type="Proteomes" id="UP000002439">
    <property type="component" value="Chromosome"/>
</dbReference>
<dbReference type="GO" id="GO:0005829">
    <property type="term" value="C:cytosol"/>
    <property type="evidence" value="ECO:0000318"/>
    <property type="project" value="GO_Central"/>
</dbReference>
<dbReference type="GO" id="GO:0002161">
    <property type="term" value="F:aminoacyl-tRNA deacylase activity"/>
    <property type="evidence" value="ECO:0007669"/>
    <property type="project" value="InterPro"/>
</dbReference>
<dbReference type="GO" id="GO:0005524">
    <property type="term" value="F:ATP binding"/>
    <property type="evidence" value="ECO:0007669"/>
    <property type="project" value="UniProtKB-UniRule"/>
</dbReference>
<dbReference type="GO" id="GO:0004822">
    <property type="term" value="F:isoleucine-tRNA ligase activity"/>
    <property type="evidence" value="ECO:0000318"/>
    <property type="project" value="GO_Central"/>
</dbReference>
<dbReference type="GO" id="GO:0000049">
    <property type="term" value="F:tRNA binding"/>
    <property type="evidence" value="ECO:0007669"/>
    <property type="project" value="InterPro"/>
</dbReference>
<dbReference type="GO" id="GO:0008270">
    <property type="term" value="F:zinc ion binding"/>
    <property type="evidence" value="ECO:0007669"/>
    <property type="project" value="UniProtKB-UniRule"/>
</dbReference>
<dbReference type="GO" id="GO:0006428">
    <property type="term" value="P:isoleucyl-tRNA aminoacylation"/>
    <property type="evidence" value="ECO:0000318"/>
    <property type="project" value="GO_Central"/>
</dbReference>
<dbReference type="CDD" id="cd07961">
    <property type="entry name" value="Anticodon_Ia_Ile_ABEc"/>
    <property type="match status" value="1"/>
</dbReference>
<dbReference type="FunFam" id="1.10.730.10:FF:000083">
    <property type="entry name" value="Isoleucine--tRNA ligase"/>
    <property type="match status" value="1"/>
</dbReference>
<dbReference type="FunFam" id="3.40.50.620:FF:000075">
    <property type="entry name" value="Isoleucine--tRNA ligase"/>
    <property type="match status" value="1"/>
</dbReference>
<dbReference type="Gene3D" id="3.40.50.620">
    <property type="entry name" value="HUPs"/>
    <property type="match status" value="2"/>
</dbReference>
<dbReference type="Gene3D" id="1.10.730.10">
    <property type="entry name" value="Isoleucyl-tRNA Synthetase, Domain 1"/>
    <property type="match status" value="1"/>
</dbReference>
<dbReference type="HAMAP" id="MF_02003">
    <property type="entry name" value="Ile_tRNA_synth_type2"/>
    <property type="match status" value="1"/>
</dbReference>
<dbReference type="InterPro" id="IPR001412">
    <property type="entry name" value="aa-tRNA-synth_I_CS"/>
</dbReference>
<dbReference type="InterPro" id="IPR002300">
    <property type="entry name" value="aa-tRNA-synth_Ia"/>
</dbReference>
<dbReference type="InterPro" id="IPR033709">
    <property type="entry name" value="Anticodon_Ile_ABEc"/>
</dbReference>
<dbReference type="InterPro" id="IPR002301">
    <property type="entry name" value="Ile-tRNA-ligase"/>
</dbReference>
<dbReference type="InterPro" id="IPR023586">
    <property type="entry name" value="Ile-tRNA-ligase_type2"/>
</dbReference>
<dbReference type="InterPro" id="IPR013155">
    <property type="entry name" value="M/V/L/I-tRNA-synth_anticd-bd"/>
</dbReference>
<dbReference type="InterPro" id="IPR014729">
    <property type="entry name" value="Rossmann-like_a/b/a_fold"/>
</dbReference>
<dbReference type="InterPro" id="IPR009080">
    <property type="entry name" value="tRNAsynth_Ia_anticodon-bd"/>
</dbReference>
<dbReference type="InterPro" id="IPR009008">
    <property type="entry name" value="Val/Leu/Ile-tRNA-synth_edit"/>
</dbReference>
<dbReference type="NCBIfam" id="TIGR00392">
    <property type="entry name" value="ileS"/>
    <property type="match status" value="1"/>
</dbReference>
<dbReference type="PANTHER" id="PTHR42780:SF1">
    <property type="entry name" value="ISOLEUCINE--TRNA LIGASE, CYTOPLASMIC"/>
    <property type="match status" value="1"/>
</dbReference>
<dbReference type="PANTHER" id="PTHR42780">
    <property type="entry name" value="SOLEUCYL-TRNA SYNTHETASE"/>
    <property type="match status" value="1"/>
</dbReference>
<dbReference type="Pfam" id="PF08264">
    <property type="entry name" value="Anticodon_1"/>
    <property type="match status" value="1"/>
</dbReference>
<dbReference type="Pfam" id="PF19302">
    <property type="entry name" value="DUF5915"/>
    <property type="match status" value="1"/>
</dbReference>
<dbReference type="Pfam" id="PF00133">
    <property type="entry name" value="tRNA-synt_1"/>
    <property type="match status" value="1"/>
</dbReference>
<dbReference type="PRINTS" id="PR00984">
    <property type="entry name" value="TRNASYNTHILE"/>
</dbReference>
<dbReference type="SUPFAM" id="SSF47323">
    <property type="entry name" value="Anticodon-binding domain of a subclass of class I aminoacyl-tRNA synthetases"/>
    <property type="match status" value="2"/>
</dbReference>
<dbReference type="SUPFAM" id="SSF52374">
    <property type="entry name" value="Nucleotidylyl transferase"/>
    <property type="match status" value="1"/>
</dbReference>
<dbReference type="SUPFAM" id="SSF50677">
    <property type="entry name" value="ValRS/IleRS/LeuRS editing domain"/>
    <property type="match status" value="1"/>
</dbReference>
<dbReference type="PROSITE" id="PS00178">
    <property type="entry name" value="AA_TRNA_LIGASE_I"/>
    <property type="match status" value="1"/>
</dbReference>
<sequence length="981" mass="114759">MPHGDLPLPPSYRPHEVKKAVEEFWRRNRIFEKWKSWRGGPKFTFLEGPPTTNGMPHVGHIRGRTYKDVVIRFYRLLGYDVWVQGGWDMQGMPVEWEVEKKLKLRSKKDIEQFGLEKFALECNSLVEEYLAYWREWGTKRLGLWLDLENAYETRQPHYLQYAWRIVKRAHELGLLTEDYRVLWFCPRCETSLSDHEVALGYDEREDPSIYVKFRVEGGVDEYLVIWTTTPWTIVDNEAVAVHPDYVYAKVEVEVGGRREYWWLAEALVPSLMAKFGIKTWRVVETKKGVELAGVRYIHPLAEEVPERASRPHQVVTAEFVTLEQGTGLVHIAPGHGPEDFELAKKYGLPVTNSVEINGIYNELGGRYKGKHVYDVDKEVTRDLRSKGLLVFEEKIRHEYPHCWRCGSKLILRADRQWFIAISRIRDKMYAELQKVNVVPTKLRDRFDIFVQNARDWNISRSRVWGTPLPVWRCKKDGRILVIGSLEELKKLAKELPPVDDFKLVHRPWIDQVKISAHDCDEWVREPYVMDVWLDSGIAWIAAVDGENNRDLWEKLFPYDFVTEGIDQTRGWFYSLLATSVLYTGRAPYKNVLIQGLILDKHGQKMSKSKGNVIWAKDLFEKYGADPVRLYILSKVAPWEDLSFDPDEVKYVIGDLNILWNVVKFADTYMSLDGFDAEKYPLSQWLEKGLEEDKWILSELNIMISEFTNFVKNFEFHKAAALWREFVVETLSHRYIRLLRRRVWSEEPSPDKYAAYAVLHDVLKKVLILGSILVPFITEYLWQAYVRKYEKNAPESVHLAQYPAAGSYDKELIYAYRELFAVFSALAEARNKAGIKLRWPIREAYVNGAKYAERYTELLKYLGNVKEVKVGRRPDYLCVKEGELEVCVPDKIEPELYYEALARELIRRIQVMRKETGLEISDEIHVVVETNSDDIKKAVEQYRDYIARETRAVKLIIDAVSQGKEWDISGEKVKIEIRKAQA</sequence>
<keyword id="KW-0030">Aminoacyl-tRNA synthetase</keyword>
<keyword id="KW-0067">ATP-binding</keyword>
<keyword id="KW-0963">Cytoplasm</keyword>
<keyword id="KW-0436">Ligase</keyword>
<keyword id="KW-0479">Metal-binding</keyword>
<keyword id="KW-0547">Nucleotide-binding</keyword>
<keyword id="KW-0648">Protein biosynthesis</keyword>
<keyword id="KW-1185">Reference proteome</keyword>
<keyword id="KW-0862">Zinc</keyword>
<name>SYI_PYRAE</name>
<gene>
    <name evidence="1" type="primary">ileS</name>
    <name type="ordered locus">PAE1617</name>
</gene>